<dbReference type="EC" id="5.4.2.7" evidence="1"/>
<dbReference type="EMBL" id="BA000034">
    <property type="protein sequence ID" value="BAC64339.1"/>
    <property type="molecule type" value="Genomic_DNA"/>
</dbReference>
<dbReference type="RefSeq" id="WP_002994004.1">
    <property type="nucleotide sequence ID" value="NC_004606.1"/>
</dbReference>
<dbReference type="SMR" id="P0DA61"/>
<dbReference type="KEGG" id="sps:SPs1244"/>
<dbReference type="HOGENOM" id="CLU_053861_0_0_9"/>
<dbReference type="UniPathway" id="UPA00002">
    <property type="reaction ID" value="UER00467"/>
</dbReference>
<dbReference type="GO" id="GO:0005829">
    <property type="term" value="C:cytosol"/>
    <property type="evidence" value="ECO:0007669"/>
    <property type="project" value="TreeGrafter"/>
</dbReference>
<dbReference type="GO" id="GO:0000287">
    <property type="term" value="F:magnesium ion binding"/>
    <property type="evidence" value="ECO:0007669"/>
    <property type="project" value="InterPro"/>
</dbReference>
<dbReference type="GO" id="GO:0030145">
    <property type="term" value="F:manganese ion binding"/>
    <property type="evidence" value="ECO:0007669"/>
    <property type="project" value="UniProtKB-UniRule"/>
</dbReference>
<dbReference type="GO" id="GO:0008973">
    <property type="term" value="F:phosphopentomutase activity"/>
    <property type="evidence" value="ECO:0007669"/>
    <property type="project" value="UniProtKB-UniRule"/>
</dbReference>
<dbReference type="GO" id="GO:0006018">
    <property type="term" value="P:2-deoxyribose 1-phosphate catabolic process"/>
    <property type="evidence" value="ECO:0007669"/>
    <property type="project" value="UniProtKB-UniRule"/>
</dbReference>
<dbReference type="GO" id="GO:0006015">
    <property type="term" value="P:5-phosphoribose 1-diphosphate biosynthetic process"/>
    <property type="evidence" value="ECO:0007669"/>
    <property type="project" value="UniProtKB-UniPathway"/>
</dbReference>
<dbReference type="GO" id="GO:0043094">
    <property type="term" value="P:metabolic compound salvage"/>
    <property type="evidence" value="ECO:0007669"/>
    <property type="project" value="InterPro"/>
</dbReference>
<dbReference type="GO" id="GO:0009117">
    <property type="term" value="P:nucleotide metabolic process"/>
    <property type="evidence" value="ECO:0007669"/>
    <property type="project" value="InterPro"/>
</dbReference>
<dbReference type="CDD" id="cd16009">
    <property type="entry name" value="PPM"/>
    <property type="match status" value="1"/>
</dbReference>
<dbReference type="FunFam" id="3.30.70.1250:FF:000001">
    <property type="entry name" value="Phosphopentomutase"/>
    <property type="match status" value="1"/>
</dbReference>
<dbReference type="Gene3D" id="3.40.720.10">
    <property type="entry name" value="Alkaline Phosphatase, subunit A"/>
    <property type="match status" value="1"/>
</dbReference>
<dbReference type="Gene3D" id="3.30.70.1250">
    <property type="entry name" value="Phosphopentomutase"/>
    <property type="match status" value="1"/>
</dbReference>
<dbReference type="HAMAP" id="MF_00740">
    <property type="entry name" value="Phosphopentomut"/>
    <property type="match status" value="1"/>
</dbReference>
<dbReference type="InterPro" id="IPR017850">
    <property type="entry name" value="Alkaline_phosphatase_core_sf"/>
</dbReference>
<dbReference type="InterPro" id="IPR010045">
    <property type="entry name" value="DeoB"/>
</dbReference>
<dbReference type="InterPro" id="IPR006124">
    <property type="entry name" value="Metalloenzyme"/>
</dbReference>
<dbReference type="InterPro" id="IPR024052">
    <property type="entry name" value="Phosphopentomutase_DeoB_cap_sf"/>
</dbReference>
<dbReference type="NCBIfam" id="TIGR01696">
    <property type="entry name" value="deoB"/>
    <property type="match status" value="1"/>
</dbReference>
<dbReference type="NCBIfam" id="NF003766">
    <property type="entry name" value="PRK05362.1"/>
    <property type="match status" value="1"/>
</dbReference>
<dbReference type="PANTHER" id="PTHR21110">
    <property type="entry name" value="PHOSPHOPENTOMUTASE"/>
    <property type="match status" value="1"/>
</dbReference>
<dbReference type="PANTHER" id="PTHR21110:SF0">
    <property type="entry name" value="PHOSPHOPENTOMUTASE"/>
    <property type="match status" value="1"/>
</dbReference>
<dbReference type="Pfam" id="PF01676">
    <property type="entry name" value="Metalloenzyme"/>
    <property type="match status" value="1"/>
</dbReference>
<dbReference type="PIRSF" id="PIRSF001491">
    <property type="entry name" value="Ppentomutase"/>
    <property type="match status" value="1"/>
</dbReference>
<dbReference type="SUPFAM" id="SSF53649">
    <property type="entry name" value="Alkaline phosphatase-like"/>
    <property type="match status" value="1"/>
</dbReference>
<dbReference type="SUPFAM" id="SSF143856">
    <property type="entry name" value="DeoB insert domain-like"/>
    <property type="match status" value="1"/>
</dbReference>
<protein>
    <recommendedName>
        <fullName evidence="1">Phosphopentomutase</fullName>
        <ecNumber evidence="1">5.4.2.7</ecNumber>
    </recommendedName>
    <alternativeName>
        <fullName evidence="1">Phosphodeoxyribomutase</fullName>
    </alternativeName>
</protein>
<comment type="function">
    <text evidence="1">Isomerase that catalyzes the conversion of deoxy-ribose 1-phosphate (dRib-1-P) and ribose 1-phosphate (Rib-1-P) to deoxy-ribose 5-phosphate (dRib-5-P) and ribose 5-phosphate (Rib-5-P), respectively.</text>
</comment>
<comment type="catalytic activity">
    <reaction evidence="1">
        <text>2-deoxy-alpha-D-ribose 1-phosphate = 2-deoxy-D-ribose 5-phosphate</text>
        <dbReference type="Rhea" id="RHEA:27658"/>
        <dbReference type="ChEBI" id="CHEBI:57259"/>
        <dbReference type="ChEBI" id="CHEBI:62877"/>
        <dbReference type="EC" id="5.4.2.7"/>
    </reaction>
</comment>
<comment type="catalytic activity">
    <reaction evidence="1">
        <text>alpha-D-ribose 1-phosphate = D-ribose 5-phosphate</text>
        <dbReference type="Rhea" id="RHEA:18793"/>
        <dbReference type="ChEBI" id="CHEBI:57720"/>
        <dbReference type="ChEBI" id="CHEBI:78346"/>
        <dbReference type="EC" id="5.4.2.7"/>
    </reaction>
</comment>
<comment type="cofactor">
    <cofactor evidence="1">
        <name>Mn(2+)</name>
        <dbReference type="ChEBI" id="CHEBI:29035"/>
    </cofactor>
    <text evidence="1">Binds 2 manganese ions.</text>
</comment>
<comment type="pathway">
    <text evidence="1">Carbohydrate degradation; 2-deoxy-D-ribose 1-phosphate degradation; D-glyceraldehyde 3-phosphate and acetaldehyde from 2-deoxy-alpha-D-ribose 1-phosphate: step 1/2.</text>
</comment>
<comment type="subcellular location">
    <subcellularLocation>
        <location evidence="1">Cytoplasm</location>
    </subcellularLocation>
</comment>
<comment type="similarity">
    <text evidence="1">Belongs to the phosphopentomutase family.</text>
</comment>
<proteinExistence type="inferred from homology"/>
<name>DEOB_STRPQ</name>
<accession>P0DA61</accession>
<accession>P63928</accession>
<accession>Q9A084</accession>
<reference key="1">
    <citation type="journal article" date="2003" name="Genome Res.">
        <title>Genome sequence of an M3 strain of Streptococcus pyogenes reveals a large-scale genomic rearrangement in invasive strains and new insights into phage evolution.</title>
        <authorList>
            <person name="Nakagawa I."/>
            <person name="Kurokawa K."/>
            <person name="Yamashita A."/>
            <person name="Nakata M."/>
            <person name="Tomiyasu Y."/>
            <person name="Okahashi N."/>
            <person name="Kawabata S."/>
            <person name="Yamazaki K."/>
            <person name="Shiba T."/>
            <person name="Yasunaga T."/>
            <person name="Hayashi H."/>
            <person name="Hattori M."/>
            <person name="Hamada S."/>
        </authorList>
    </citation>
    <scope>NUCLEOTIDE SEQUENCE [LARGE SCALE GENOMIC DNA]</scope>
    <source>
        <strain>SSI-1</strain>
    </source>
</reference>
<keyword id="KW-0963">Cytoplasm</keyword>
<keyword id="KW-0413">Isomerase</keyword>
<keyword id="KW-0464">Manganese</keyword>
<keyword id="KW-0479">Metal-binding</keyword>
<evidence type="ECO:0000255" key="1">
    <source>
        <dbReference type="HAMAP-Rule" id="MF_00740"/>
    </source>
</evidence>
<gene>
    <name evidence="1" type="primary">deoB</name>
    <name type="ordered locus">SPs1244</name>
</gene>
<feature type="chain" id="PRO_0000411318" description="Phosphopentomutase">
    <location>
        <begin position="1"/>
        <end position="403"/>
    </location>
</feature>
<feature type="binding site" evidence="1">
    <location>
        <position position="13"/>
    </location>
    <ligand>
        <name>Mn(2+)</name>
        <dbReference type="ChEBI" id="CHEBI:29035"/>
        <label>1</label>
    </ligand>
</feature>
<feature type="binding site" evidence="1">
    <location>
        <position position="298"/>
    </location>
    <ligand>
        <name>Mn(2+)</name>
        <dbReference type="ChEBI" id="CHEBI:29035"/>
        <label>2</label>
    </ligand>
</feature>
<feature type="binding site" evidence="1">
    <location>
        <position position="303"/>
    </location>
    <ligand>
        <name>Mn(2+)</name>
        <dbReference type="ChEBI" id="CHEBI:29035"/>
        <label>2</label>
    </ligand>
</feature>
<feature type="binding site" evidence="1">
    <location>
        <position position="339"/>
    </location>
    <ligand>
        <name>Mn(2+)</name>
        <dbReference type="ChEBI" id="CHEBI:29035"/>
        <label>1</label>
    </ligand>
</feature>
<feature type="binding site" evidence="1">
    <location>
        <position position="340"/>
    </location>
    <ligand>
        <name>Mn(2+)</name>
        <dbReference type="ChEBI" id="CHEBI:29035"/>
        <label>1</label>
    </ligand>
</feature>
<feature type="binding site" evidence="1">
    <location>
        <position position="351"/>
    </location>
    <ligand>
        <name>Mn(2+)</name>
        <dbReference type="ChEBI" id="CHEBI:29035"/>
        <label>2</label>
    </ligand>
</feature>
<organism>
    <name type="scientific">Streptococcus pyogenes serotype M3 (strain SSI-1)</name>
    <dbReference type="NCBI Taxonomy" id="193567"/>
    <lineage>
        <taxon>Bacteria</taxon>
        <taxon>Bacillati</taxon>
        <taxon>Bacillota</taxon>
        <taxon>Bacilli</taxon>
        <taxon>Lactobacillales</taxon>
        <taxon>Streptococcaceae</taxon>
        <taxon>Streptococcus</taxon>
    </lineage>
</organism>
<sequence>MSKFNRIHLVVLDSVGIGAAPDADKFFNAGVADTDSDTLGHISEAAGLSVPNMAKIGLGNISRPIPLKTVPTEDNPTGYVTKLEEVSLGKDTMTGHWEIMGLNITEPFDTFWNGFPEEILTKIEEFSGRKIIREANKPYSGTAVIDDFGPRQMETGELIVYTSADPVLQIAAHEDIIPVEELYKICEYARSITLERPALLGRIIARPYVGDPGNFTRTANRHDYAVSPFQDTVLNKLADAGVPTYAVGKINDIFNGSGITNDMGHNKSNSHGIDTLIKTLQLPEFTKGFSFTNLVDFDANFGHRRDPEGYRDCLHEFDNRLPEIIANMKEDDLLLITADHGNDPTYAGTDHTREYIPLLAYSVSFTGNGLIPQGHFADISATVAENFGVDTAMIGESFLSHLK</sequence>